<proteinExistence type="inferred from homology"/>
<reference key="1">
    <citation type="journal article" date="2005" name="Genome Res.">
        <title>Comparative and functional genomic analyses of the pathogenicity of phytopathogen Xanthomonas campestris pv. campestris.</title>
        <authorList>
            <person name="Qian W."/>
            <person name="Jia Y."/>
            <person name="Ren S.-X."/>
            <person name="He Y.-Q."/>
            <person name="Feng J.-X."/>
            <person name="Lu L.-F."/>
            <person name="Sun Q."/>
            <person name="Ying G."/>
            <person name="Tang D.-J."/>
            <person name="Tang H."/>
            <person name="Wu W."/>
            <person name="Hao P."/>
            <person name="Wang L."/>
            <person name="Jiang B.-L."/>
            <person name="Zeng S."/>
            <person name="Gu W.-Y."/>
            <person name="Lu G."/>
            <person name="Rong L."/>
            <person name="Tian Y."/>
            <person name="Yao Z."/>
            <person name="Fu G."/>
            <person name="Chen B."/>
            <person name="Fang R."/>
            <person name="Qiang B."/>
            <person name="Chen Z."/>
            <person name="Zhao G.-P."/>
            <person name="Tang J.-L."/>
            <person name="He C."/>
        </authorList>
    </citation>
    <scope>NUCLEOTIDE SEQUENCE [LARGE SCALE GENOMIC DNA]</scope>
    <source>
        <strain>8004</strain>
    </source>
</reference>
<sequence>MSVVVRHDWDRKELHALFALPFPELLHRAASVHRAHFDPAEVQVSTLLSVKTGGCPEDCAYCPQAQRYDTGVSAQKLMDTEDVVAKARQAKAAGASRFCMGAAWRSPKDRDIPKVAAMIREVKAMGLETCATLGMLDAGQARALKDAGLDYYNHNLDTAPDYYDSIIHTRQYQDRLNTLEHVRDVGLKTCCGGIVGMGETREHRVGLLHALATLPAHPDSVPINQLVQVPGTPLHGTEPLDAFEFVRMIAVARIAMPKSMVRLSAGREAMSDELQALCFLAGANSIFYGEKLLTTGNPDTERDQGLFQRLGLRPMQITVDAAEHDHPGTVHADITCGAACEHAA</sequence>
<organism>
    <name type="scientific">Xanthomonas campestris pv. campestris (strain 8004)</name>
    <dbReference type="NCBI Taxonomy" id="314565"/>
    <lineage>
        <taxon>Bacteria</taxon>
        <taxon>Pseudomonadati</taxon>
        <taxon>Pseudomonadota</taxon>
        <taxon>Gammaproteobacteria</taxon>
        <taxon>Lysobacterales</taxon>
        <taxon>Lysobacteraceae</taxon>
        <taxon>Xanthomonas</taxon>
    </lineage>
</organism>
<comment type="function">
    <text evidence="1">Catalyzes the conversion of dethiobiotin (DTB) to biotin by the insertion of a sulfur atom into dethiobiotin via a radical-based mechanism.</text>
</comment>
<comment type="catalytic activity">
    <reaction evidence="1">
        <text>(4R,5S)-dethiobiotin + (sulfur carrier)-SH + 2 reduced [2Fe-2S]-[ferredoxin] + 2 S-adenosyl-L-methionine = (sulfur carrier)-H + biotin + 2 5'-deoxyadenosine + 2 L-methionine + 2 oxidized [2Fe-2S]-[ferredoxin]</text>
        <dbReference type="Rhea" id="RHEA:22060"/>
        <dbReference type="Rhea" id="RHEA-COMP:10000"/>
        <dbReference type="Rhea" id="RHEA-COMP:10001"/>
        <dbReference type="Rhea" id="RHEA-COMP:14737"/>
        <dbReference type="Rhea" id="RHEA-COMP:14739"/>
        <dbReference type="ChEBI" id="CHEBI:17319"/>
        <dbReference type="ChEBI" id="CHEBI:29917"/>
        <dbReference type="ChEBI" id="CHEBI:33737"/>
        <dbReference type="ChEBI" id="CHEBI:33738"/>
        <dbReference type="ChEBI" id="CHEBI:57586"/>
        <dbReference type="ChEBI" id="CHEBI:57844"/>
        <dbReference type="ChEBI" id="CHEBI:59789"/>
        <dbReference type="ChEBI" id="CHEBI:64428"/>
        <dbReference type="ChEBI" id="CHEBI:149473"/>
        <dbReference type="EC" id="2.8.1.6"/>
    </reaction>
</comment>
<comment type="cofactor">
    <cofactor evidence="1">
        <name>[4Fe-4S] cluster</name>
        <dbReference type="ChEBI" id="CHEBI:49883"/>
    </cofactor>
    <text evidence="1">Binds 1 [4Fe-4S] cluster. The cluster is coordinated with 3 cysteines and an exchangeable S-adenosyl-L-methionine.</text>
</comment>
<comment type="cofactor">
    <cofactor evidence="1">
        <name>[2Fe-2S] cluster</name>
        <dbReference type="ChEBI" id="CHEBI:190135"/>
    </cofactor>
    <text evidence="1">Binds 1 [2Fe-2S] cluster. The cluster is coordinated with 3 cysteines and 1 arginine.</text>
</comment>
<comment type="pathway">
    <text evidence="1">Cofactor biosynthesis; biotin biosynthesis; biotin from 7,8-diaminononanoate: step 2/2.</text>
</comment>
<comment type="subunit">
    <text evidence="1">Homodimer.</text>
</comment>
<comment type="similarity">
    <text evidence="1">Belongs to the radical SAM superfamily. Biotin synthase family.</text>
</comment>
<name>BIOB_XANC8</name>
<gene>
    <name evidence="1" type="primary">bioB</name>
    <name type="ordered locus">XC_0400</name>
</gene>
<accession>Q4UZN8</accession>
<feature type="chain" id="PRO_0000381708" description="Biotin synthase">
    <location>
        <begin position="1"/>
        <end position="344"/>
    </location>
</feature>
<feature type="domain" description="Radical SAM core" evidence="2">
    <location>
        <begin position="40"/>
        <end position="267"/>
    </location>
</feature>
<feature type="binding site" evidence="1">
    <location>
        <position position="55"/>
    </location>
    <ligand>
        <name>[4Fe-4S] cluster</name>
        <dbReference type="ChEBI" id="CHEBI:49883"/>
        <note>4Fe-4S-S-AdoMet</note>
    </ligand>
</feature>
<feature type="binding site" evidence="1">
    <location>
        <position position="59"/>
    </location>
    <ligand>
        <name>[4Fe-4S] cluster</name>
        <dbReference type="ChEBI" id="CHEBI:49883"/>
        <note>4Fe-4S-S-AdoMet</note>
    </ligand>
</feature>
<feature type="binding site" evidence="1">
    <location>
        <position position="62"/>
    </location>
    <ligand>
        <name>[4Fe-4S] cluster</name>
        <dbReference type="ChEBI" id="CHEBI:49883"/>
        <note>4Fe-4S-S-AdoMet</note>
    </ligand>
</feature>
<feature type="binding site" evidence="1">
    <location>
        <position position="99"/>
    </location>
    <ligand>
        <name>[2Fe-2S] cluster</name>
        <dbReference type="ChEBI" id="CHEBI:190135"/>
    </ligand>
</feature>
<feature type="binding site" evidence="1">
    <location>
        <position position="130"/>
    </location>
    <ligand>
        <name>[2Fe-2S] cluster</name>
        <dbReference type="ChEBI" id="CHEBI:190135"/>
    </ligand>
</feature>
<feature type="binding site" evidence="1">
    <location>
        <position position="190"/>
    </location>
    <ligand>
        <name>[2Fe-2S] cluster</name>
        <dbReference type="ChEBI" id="CHEBI:190135"/>
    </ligand>
</feature>
<feature type="binding site" evidence="1">
    <location>
        <position position="262"/>
    </location>
    <ligand>
        <name>[2Fe-2S] cluster</name>
        <dbReference type="ChEBI" id="CHEBI:190135"/>
    </ligand>
</feature>
<keyword id="KW-0001">2Fe-2S</keyword>
<keyword id="KW-0004">4Fe-4S</keyword>
<keyword id="KW-0093">Biotin biosynthesis</keyword>
<keyword id="KW-0408">Iron</keyword>
<keyword id="KW-0411">Iron-sulfur</keyword>
<keyword id="KW-0479">Metal-binding</keyword>
<keyword id="KW-0949">S-adenosyl-L-methionine</keyword>
<keyword id="KW-0808">Transferase</keyword>
<protein>
    <recommendedName>
        <fullName evidence="1">Biotin synthase</fullName>
        <ecNumber evidence="1">2.8.1.6</ecNumber>
    </recommendedName>
</protein>
<dbReference type="EC" id="2.8.1.6" evidence="1"/>
<dbReference type="EMBL" id="CP000050">
    <property type="protein sequence ID" value="AAY47485.1"/>
    <property type="molecule type" value="Genomic_DNA"/>
</dbReference>
<dbReference type="RefSeq" id="WP_011035642.1">
    <property type="nucleotide sequence ID" value="NZ_CP155948.1"/>
</dbReference>
<dbReference type="SMR" id="Q4UZN8"/>
<dbReference type="KEGG" id="xcb:XC_0400"/>
<dbReference type="HOGENOM" id="CLU_033172_1_2_6"/>
<dbReference type="UniPathway" id="UPA00078">
    <property type="reaction ID" value="UER00162"/>
</dbReference>
<dbReference type="Proteomes" id="UP000000420">
    <property type="component" value="Chromosome"/>
</dbReference>
<dbReference type="GO" id="GO:0051537">
    <property type="term" value="F:2 iron, 2 sulfur cluster binding"/>
    <property type="evidence" value="ECO:0007669"/>
    <property type="project" value="UniProtKB-KW"/>
</dbReference>
<dbReference type="GO" id="GO:0051539">
    <property type="term" value="F:4 iron, 4 sulfur cluster binding"/>
    <property type="evidence" value="ECO:0007669"/>
    <property type="project" value="UniProtKB-KW"/>
</dbReference>
<dbReference type="GO" id="GO:0004076">
    <property type="term" value="F:biotin synthase activity"/>
    <property type="evidence" value="ECO:0007669"/>
    <property type="project" value="UniProtKB-UniRule"/>
</dbReference>
<dbReference type="GO" id="GO:0005506">
    <property type="term" value="F:iron ion binding"/>
    <property type="evidence" value="ECO:0007669"/>
    <property type="project" value="UniProtKB-UniRule"/>
</dbReference>
<dbReference type="GO" id="GO:0009102">
    <property type="term" value="P:biotin biosynthetic process"/>
    <property type="evidence" value="ECO:0007669"/>
    <property type="project" value="UniProtKB-UniRule"/>
</dbReference>
<dbReference type="CDD" id="cd01335">
    <property type="entry name" value="Radical_SAM"/>
    <property type="match status" value="1"/>
</dbReference>
<dbReference type="FunFam" id="3.20.20.70:FF:000011">
    <property type="entry name" value="Biotin synthase"/>
    <property type="match status" value="1"/>
</dbReference>
<dbReference type="Gene3D" id="3.20.20.70">
    <property type="entry name" value="Aldolase class I"/>
    <property type="match status" value="1"/>
</dbReference>
<dbReference type="HAMAP" id="MF_01694">
    <property type="entry name" value="BioB"/>
    <property type="match status" value="1"/>
</dbReference>
<dbReference type="InterPro" id="IPR013785">
    <property type="entry name" value="Aldolase_TIM"/>
</dbReference>
<dbReference type="InterPro" id="IPR010722">
    <property type="entry name" value="BATS_dom"/>
</dbReference>
<dbReference type="InterPro" id="IPR002684">
    <property type="entry name" value="Biotin_synth/BioAB"/>
</dbReference>
<dbReference type="InterPro" id="IPR024177">
    <property type="entry name" value="Biotin_synthase"/>
</dbReference>
<dbReference type="InterPro" id="IPR006638">
    <property type="entry name" value="Elp3/MiaA/NifB-like_rSAM"/>
</dbReference>
<dbReference type="InterPro" id="IPR007197">
    <property type="entry name" value="rSAM"/>
</dbReference>
<dbReference type="NCBIfam" id="TIGR00433">
    <property type="entry name" value="bioB"/>
    <property type="match status" value="1"/>
</dbReference>
<dbReference type="PANTHER" id="PTHR22976">
    <property type="entry name" value="BIOTIN SYNTHASE"/>
    <property type="match status" value="1"/>
</dbReference>
<dbReference type="PANTHER" id="PTHR22976:SF2">
    <property type="entry name" value="BIOTIN SYNTHASE, MITOCHONDRIAL"/>
    <property type="match status" value="1"/>
</dbReference>
<dbReference type="Pfam" id="PF06968">
    <property type="entry name" value="BATS"/>
    <property type="match status" value="1"/>
</dbReference>
<dbReference type="Pfam" id="PF04055">
    <property type="entry name" value="Radical_SAM"/>
    <property type="match status" value="1"/>
</dbReference>
<dbReference type="PIRSF" id="PIRSF001619">
    <property type="entry name" value="Biotin_synth"/>
    <property type="match status" value="1"/>
</dbReference>
<dbReference type="SFLD" id="SFLDF00272">
    <property type="entry name" value="biotin_synthase"/>
    <property type="match status" value="1"/>
</dbReference>
<dbReference type="SFLD" id="SFLDG01278">
    <property type="entry name" value="biotin_synthase_like"/>
    <property type="match status" value="1"/>
</dbReference>
<dbReference type="SMART" id="SM00876">
    <property type="entry name" value="BATS"/>
    <property type="match status" value="1"/>
</dbReference>
<dbReference type="SMART" id="SM00729">
    <property type="entry name" value="Elp3"/>
    <property type="match status" value="1"/>
</dbReference>
<dbReference type="SUPFAM" id="SSF102114">
    <property type="entry name" value="Radical SAM enzymes"/>
    <property type="match status" value="1"/>
</dbReference>
<dbReference type="PROSITE" id="PS51918">
    <property type="entry name" value="RADICAL_SAM"/>
    <property type="match status" value="1"/>
</dbReference>
<evidence type="ECO:0000255" key="1">
    <source>
        <dbReference type="HAMAP-Rule" id="MF_01694"/>
    </source>
</evidence>
<evidence type="ECO:0000255" key="2">
    <source>
        <dbReference type="PROSITE-ProRule" id="PRU01266"/>
    </source>
</evidence>